<comment type="function">
    <text evidence="1">Peptide chain release factor 1 directs the termination of translation in response to the peptide chain termination codons UAG and UAA.</text>
</comment>
<comment type="subcellular location">
    <subcellularLocation>
        <location evidence="1">Cytoplasm</location>
    </subcellularLocation>
</comment>
<comment type="PTM">
    <text evidence="1">Methylated by PrmC. Methylation increases the termination efficiency of RF1.</text>
</comment>
<comment type="similarity">
    <text evidence="1">Belongs to the prokaryotic/mitochondrial release factor family.</text>
</comment>
<feature type="chain" id="PRO_0000263239" description="Peptide chain release factor 1">
    <location>
        <begin position="1"/>
        <end position="360"/>
    </location>
</feature>
<feature type="modified residue" description="N5-methylglutamine" evidence="1">
    <location>
        <position position="235"/>
    </location>
</feature>
<name>RF1_BLOPB</name>
<sequence length="360" mass="41284">MNSIIVNKLIALQERFNVLEKLLSKPNAIDDKKHFCTLAKEHARLSEIVVCFERWLDIKQEIINTKKLLEDVDMHDIAQDELKTFYLNRNNIEKNLKILLLPTDSNDKLGCFIELRAGTGGKEAAIFTGELFRMYVRYSEVRRWKMEIINATYGECGGYKEIIAKIPYRGAYSLLKFESGGHRVQRIPHTESQGRIHTSTCTIAVIPEIPDIELPSIDPHDLRIDTFRSSGAGGQHVNTTDSAIRITHVPSGLVVECQDERSQHKNKAKALSVLGSRLHAIEMKRRQQEVSCTRRNLLGTGDRSDRIRTYNFQQGRITDHRISFTSYKLNEIMNGELDLLIQPIIHQHQSDQLNKLLELE</sequence>
<protein>
    <recommendedName>
        <fullName evidence="1">Peptide chain release factor 1</fullName>
        <shortName evidence="1">RF-1</shortName>
    </recommendedName>
</protein>
<reference key="1">
    <citation type="journal article" date="2005" name="Genome Res.">
        <title>Genome sequence of Blochmannia pennsylvanicus indicates parallel evolutionary trends among bacterial mutualists of insects.</title>
        <authorList>
            <person name="Degnan P.H."/>
            <person name="Lazarus A.B."/>
            <person name="Wernegreen J.J."/>
        </authorList>
    </citation>
    <scope>NUCLEOTIDE SEQUENCE [LARGE SCALE GENOMIC DNA]</scope>
    <source>
        <strain>BPEN</strain>
    </source>
</reference>
<gene>
    <name evidence="1" type="primary">prfA</name>
    <name type="ordered locus">BPEN_359</name>
</gene>
<evidence type="ECO:0000255" key="1">
    <source>
        <dbReference type="HAMAP-Rule" id="MF_00093"/>
    </source>
</evidence>
<accession>Q492V8</accession>
<dbReference type="EMBL" id="CP000016">
    <property type="protein sequence ID" value="AAZ40984.1"/>
    <property type="molecule type" value="Genomic_DNA"/>
</dbReference>
<dbReference type="RefSeq" id="WP_011282893.1">
    <property type="nucleotide sequence ID" value="NC_007292.1"/>
</dbReference>
<dbReference type="SMR" id="Q492V8"/>
<dbReference type="STRING" id="291272.BPEN_359"/>
<dbReference type="KEGG" id="bpn:BPEN_359"/>
<dbReference type="eggNOG" id="COG0216">
    <property type="taxonomic scope" value="Bacteria"/>
</dbReference>
<dbReference type="HOGENOM" id="CLU_036856_0_1_6"/>
<dbReference type="OrthoDB" id="9806673at2"/>
<dbReference type="Proteomes" id="UP000007794">
    <property type="component" value="Chromosome"/>
</dbReference>
<dbReference type="GO" id="GO:0005737">
    <property type="term" value="C:cytoplasm"/>
    <property type="evidence" value="ECO:0007669"/>
    <property type="project" value="UniProtKB-SubCell"/>
</dbReference>
<dbReference type="GO" id="GO:0016149">
    <property type="term" value="F:translation release factor activity, codon specific"/>
    <property type="evidence" value="ECO:0007669"/>
    <property type="project" value="UniProtKB-UniRule"/>
</dbReference>
<dbReference type="FunFam" id="3.30.160.20:FF:000004">
    <property type="entry name" value="Peptide chain release factor 1"/>
    <property type="match status" value="1"/>
</dbReference>
<dbReference type="FunFam" id="3.30.70.1660:FF:000002">
    <property type="entry name" value="Peptide chain release factor 1"/>
    <property type="match status" value="1"/>
</dbReference>
<dbReference type="FunFam" id="3.30.70.1660:FF:000004">
    <property type="entry name" value="Peptide chain release factor 1"/>
    <property type="match status" value="1"/>
</dbReference>
<dbReference type="Gene3D" id="3.30.160.20">
    <property type="match status" value="1"/>
</dbReference>
<dbReference type="Gene3D" id="3.30.70.1660">
    <property type="match status" value="1"/>
</dbReference>
<dbReference type="Gene3D" id="6.10.140.1950">
    <property type="match status" value="1"/>
</dbReference>
<dbReference type="HAMAP" id="MF_00093">
    <property type="entry name" value="Rel_fac_1"/>
    <property type="match status" value="1"/>
</dbReference>
<dbReference type="InterPro" id="IPR005139">
    <property type="entry name" value="PCRF"/>
</dbReference>
<dbReference type="InterPro" id="IPR000352">
    <property type="entry name" value="Pep_chain_release_fac_I"/>
</dbReference>
<dbReference type="InterPro" id="IPR045853">
    <property type="entry name" value="Pep_chain_release_fac_I_sf"/>
</dbReference>
<dbReference type="InterPro" id="IPR050057">
    <property type="entry name" value="Prokaryotic/Mito_RF"/>
</dbReference>
<dbReference type="InterPro" id="IPR004373">
    <property type="entry name" value="RF-1"/>
</dbReference>
<dbReference type="NCBIfam" id="TIGR00019">
    <property type="entry name" value="prfA"/>
    <property type="match status" value="1"/>
</dbReference>
<dbReference type="NCBIfam" id="NF001859">
    <property type="entry name" value="PRK00591.1"/>
    <property type="match status" value="1"/>
</dbReference>
<dbReference type="PANTHER" id="PTHR43804">
    <property type="entry name" value="LD18447P"/>
    <property type="match status" value="1"/>
</dbReference>
<dbReference type="PANTHER" id="PTHR43804:SF7">
    <property type="entry name" value="LD18447P"/>
    <property type="match status" value="1"/>
</dbReference>
<dbReference type="Pfam" id="PF03462">
    <property type="entry name" value="PCRF"/>
    <property type="match status" value="1"/>
</dbReference>
<dbReference type="Pfam" id="PF00472">
    <property type="entry name" value="RF-1"/>
    <property type="match status" value="1"/>
</dbReference>
<dbReference type="SMART" id="SM00937">
    <property type="entry name" value="PCRF"/>
    <property type="match status" value="1"/>
</dbReference>
<dbReference type="SUPFAM" id="SSF75620">
    <property type="entry name" value="Release factor"/>
    <property type="match status" value="1"/>
</dbReference>
<dbReference type="PROSITE" id="PS00745">
    <property type="entry name" value="RF_PROK_I"/>
    <property type="match status" value="1"/>
</dbReference>
<organism>
    <name type="scientific">Blochmanniella pennsylvanica (strain BPEN)</name>
    <dbReference type="NCBI Taxonomy" id="291272"/>
    <lineage>
        <taxon>Bacteria</taxon>
        <taxon>Pseudomonadati</taxon>
        <taxon>Pseudomonadota</taxon>
        <taxon>Gammaproteobacteria</taxon>
        <taxon>Enterobacterales</taxon>
        <taxon>Enterobacteriaceae</taxon>
        <taxon>ant endosymbionts</taxon>
        <taxon>Candidatus Blochmanniella</taxon>
    </lineage>
</organism>
<keyword id="KW-0963">Cytoplasm</keyword>
<keyword id="KW-0488">Methylation</keyword>
<keyword id="KW-0648">Protein biosynthesis</keyword>
<keyword id="KW-1185">Reference proteome</keyword>
<proteinExistence type="inferred from homology"/>